<reference key="1">
    <citation type="journal article" date="1987" name="J. Mol. Biol.">
        <title>Nucleotide sequence of a chicken vitellogenin gene and derived amino acid sequence of the encoded yolk precursor protein.</title>
        <authorList>
            <person name="van Het Schip A.D."/>
            <person name="Samallo J."/>
            <person name="Broos J."/>
            <person name="Ophuis J."/>
            <person name="Mojet M."/>
            <person name="Gruber M."/>
            <person name="Ab G."/>
        </authorList>
    </citation>
    <scope>NUCLEOTIDE SEQUENCE [GENOMIC DNA]</scope>
</reference>
<reference key="2">
    <citation type="journal article" date="1987" name="J. Biol. Chem.">
        <title>Comparison of the organization and fine structure of a chicken and a Xenopus laevis vitellogenin gene.</title>
        <authorList>
            <person name="Nardelli D."/>
            <person name="Het Schip F.D."/>
            <person name="Gerber-Huber S."/>
            <person name="Haefliger J.-A."/>
            <person name="Gruber M."/>
            <person name="Ab G."/>
            <person name="Wahli W."/>
        </authorList>
    </citation>
    <scope>NUCLEOTIDE SEQUENCE [GENOMIC DNA]</scope>
</reference>
<reference key="3">
    <citation type="journal article" date="1983" name="EMBO J.">
        <title>Sequence homologies within the 5' end region of the estrogen-controlled vitellogenin gene in Xenopus and chicken.</title>
        <authorList>
            <person name="Walker P."/>
            <person name="Brown-Luedi M."/>
            <person name="Germond J.-E."/>
            <person name="Wahli W."/>
            <person name="Meijlink F.C.P.W."/>
            <person name="van Het Schip A.D."/>
            <person name="Roelink H."/>
            <person name="Gruber M."/>
            <person name="Geert A.B."/>
        </authorList>
    </citation>
    <scope>NUCLEOTIDE SEQUENCE [GENOMIC DNA] OF 1-71</scope>
</reference>
<reference key="4">
    <citation type="journal article" date="1984" name="Nucleic Acids Res.">
        <title>Identification and sequence analysis of the 5' end of the major chicken vitellogenin gene.</title>
        <authorList>
            <person name="Burch J.B.E."/>
        </authorList>
    </citation>
    <scope>NUCLEOTIDE SEQUENCE [GENOMIC DNA] OF 1-71</scope>
</reference>
<reference key="5">
    <citation type="journal article" date="1984" name="Biochemistry">
        <title>Amino acid sequence of phosvitin derived from the nucleotide sequence of part of the chicken vitellogenin gene.</title>
        <authorList>
            <person name="Byrne B.M."/>
            <person name="van Het Schip A.D."/>
            <person name="van de Klundert J.A.M."/>
            <person name="Arnberg A.C."/>
            <person name="Gruber M."/>
            <person name="Ab G."/>
        </authorList>
    </citation>
    <scope>NUCLEOTIDE SEQUENCE [GENOMIC DNA] OF 1092-1338</scope>
</reference>
<reference key="6">
    <citation type="journal article" date="1985" name="Int. J. Biochem.">
        <title>The primary structure of avian phosvitins. Contributions through the Edman degradation of methylmercaptovitins prepared from the constituent phosphoproteins.</title>
        <authorList>
            <person name="Clark R.C."/>
        </authorList>
    </citation>
    <scope>PROTEIN SEQUENCE OF 1112-1188</scope>
</reference>
<reference key="7">
    <citation type="journal article" date="1995" name="Biochim. Biophys. Acta">
        <title>Precursor-product relationship between chicken vitellogenin and the yolk proteins: the 40 kDa yolk plasma glycoprotein is derived from the C-terminal cysteine-rich domain of vitellogenin II.</title>
        <authorList>
            <person name="Yamamura J."/>
            <person name="Adachi T."/>
            <person name="Aoki N."/>
            <person name="Nakajima H."/>
            <person name="Nakamura R."/>
            <person name="Matsuda T."/>
        </authorList>
    </citation>
    <scope>PROTEIN SEQUENCE OF 1567-1580</scope>
    <scope>IDENTIFICATION OF CHAINS</scope>
    <source>
        <tissue>Liver</tissue>
    </source>
</reference>
<reference key="8">
    <citation type="journal article" date="1989" name="J. Mol. Evol.">
        <title>Characterization of a polymorphism in the 3' part of the chicken vitellogenin gene.</title>
        <authorList>
            <person name="Philipsen J.N.J."/>
            <person name="De Vries J.E."/>
            <person name="Samallo J."/>
            <person name="Van Dijk C."/>
            <person name="Arnberg A.C."/>
            <person name="Ab G."/>
        </authorList>
    </citation>
    <scope>NUCLEOTIDE SEQUENCE [GENOMIC DNA] OF 1705-1757</scope>
    <source>
        <strain>White leghorn</strain>
        <tissue>Liver</tissue>
    </source>
</reference>
<dbReference type="EMBL" id="X00345">
    <property type="protein sequence ID" value="CAA25096.1"/>
    <property type="molecule type" value="Genomic_DNA"/>
</dbReference>
<dbReference type="EMBL" id="M18060">
    <property type="protein sequence ID" value="AAA49139.1"/>
    <property type="molecule type" value="Genomic_DNA"/>
</dbReference>
<dbReference type="EMBL" id="X00204">
    <property type="protein sequence ID" value="CAA25027.1"/>
    <property type="molecule type" value="Genomic_DNA"/>
</dbReference>
<dbReference type="EMBL" id="X13607">
    <property type="protein sequence ID" value="CAA31942.1"/>
    <property type="molecule type" value="Genomic_DNA"/>
</dbReference>
<dbReference type="EMBL" id="K02113">
    <property type="protein sequence ID" value="AAA98791.1"/>
    <property type="molecule type" value="Genomic_DNA"/>
</dbReference>
<dbReference type="EMBL" id="X14729">
    <property type="protein sequence ID" value="CAA32851.1"/>
    <property type="molecule type" value="Genomic_DNA"/>
</dbReference>
<dbReference type="PIR" id="I50441">
    <property type="entry name" value="VJCH2"/>
</dbReference>
<dbReference type="RefSeq" id="NP_001026447.1">
    <property type="nucleotide sequence ID" value="NM_001031276.1"/>
</dbReference>
<dbReference type="SMR" id="P02845"/>
<dbReference type="FunCoup" id="P02845">
    <property type="interactions" value="3"/>
</dbReference>
<dbReference type="STRING" id="9031.ENSGALP00000002888"/>
<dbReference type="GlyCosmos" id="P02845">
    <property type="glycosylation" value="8 sites, No reported glycans"/>
</dbReference>
<dbReference type="GlyGen" id="P02845">
    <property type="glycosylation" value="8 sites"/>
</dbReference>
<dbReference type="PaxDb" id="9031-ENSGALP00000002888"/>
<dbReference type="GeneID" id="424533"/>
<dbReference type="KEGG" id="gga:424533"/>
<dbReference type="CTD" id="559931"/>
<dbReference type="VEuPathDB" id="HostDB:geneid_424533"/>
<dbReference type="eggNOG" id="KOG4338">
    <property type="taxonomic scope" value="Eukaryota"/>
</dbReference>
<dbReference type="InParanoid" id="P02845"/>
<dbReference type="OrthoDB" id="5956066at2759"/>
<dbReference type="PhylomeDB" id="P02845"/>
<dbReference type="PRO" id="PR:P02845"/>
<dbReference type="Proteomes" id="UP000000539">
    <property type="component" value="Unassembled WGS sequence"/>
</dbReference>
<dbReference type="GO" id="GO:0005319">
    <property type="term" value="F:lipid transporter activity"/>
    <property type="evidence" value="ECO:0000318"/>
    <property type="project" value="GO_Central"/>
</dbReference>
<dbReference type="GO" id="GO:0045735">
    <property type="term" value="F:nutrient reservoir activity"/>
    <property type="evidence" value="ECO:0007669"/>
    <property type="project" value="UniProtKB-KW"/>
</dbReference>
<dbReference type="GO" id="GO:0071391">
    <property type="term" value="P:cellular response to estrogen stimulus"/>
    <property type="evidence" value="ECO:0000318"/>
    <property type="project" value="GO_Central"/>
</dbReference>
<dbReference type="GO" id="GO:0032355">
    <property type="term" value="P:response to estradiol"/>
    <property type="evidence" value="ECO:0000318"/>
    <property type="project" value="GO_Central"/>
</dbReference>
<dbReference type="FunFam" id="2.20.50.20:FF:000005">
    <property type="entry name" value="Vitellogenin 3"/>
    <property type="match status" value="1"/>
</dbReference>
<dbReference type="FunFam" id="1.25.10.20:FF:000002">
    <property type="entry name" value="Vitellogenin 7"/>
    <property type="match status" value="1"/>
</dbReference>
<dbReference type="FunFam" id="2.30.230.10:FF:000002">
    <property type="entry name" value="Vitellogenin 7"/>
    <property type="match status" value="1"/>
</dbReference>
<dbReference type="Gene3D" id="2.30.230.10">
    <property type="entry name" value="Lipovitellin, beta-sheet shell regions, chain A"/>
    <property type="match status" value="1"/>
</dbReference>
<dbReference type="Gene3D" id="2.20.80.10">
    <property type="entry name" value="Lipovitellin-phosvitin complex, chain A, domain 4"/>
    <property type="match status" value="1"/>
</dbReference>
<dbReference type="Gene3D" id="2.20.50.20">
    <property type="entry name" value="Lipovitellin. Chain A, domain 3"/>
    <property type="match status" value="2"/>
</dbReference>
<dbReference type="Gene3D" id="2.20.90.10">
    <property type="entry name" value="Vitellinogen, beta-sheet shell domain"/>
    <property type="match status" value="1"/>
</dbReference>
<dbReference type="Gene3D" id="1.25.10.20">
    <property type="entry name" value="Vitellinogen, superhelical"/>
    <property type="match status" value="1"/>
</dbReference>
<dbReference type="InterPro" id="IPR015819">
    <property type="entry name" value="Lipid_transp_b-sht_shell"/>
</dbReference>
<dbReference type="InterPro" id="IPR011030">
    <property type="entry name" value="Lipovitellin_superhlx_dom"/>
</dbReference>
<dbReference type="InterPro" id="IPR015816">
    <property type="entry name" value="Vitellinogen_b-sht_N"/>
</dbReference>
<dbReference type="InterPro" id="IPR015258">
    <property type="entry name" value="Vitellinogen_b-sht_shell"/>
</dbReference>
<dbReference type="InterPro" id="IPR037088">
    <property type="entry name" value="Vitellinogen_b-sht_shell_sf"/>
</dbReference>
<dbReference type="InterPro" id="IPR015255">
    <property type="entry name" value="Vitellinogen_open_b-sht"/>
</dbReference>
<dbReference type="InterPro" id="IPR015817">
    <property type="entry name" value="Vitellinogen_open_b-sht_sub1"/>
</dbReference>
<dbReference type="InterPro" id="IPR050733">
    <property type="entry name" value="Vitellogenin/Apolipophorin"/>
</dbReference>
<dbReference type="InterPro" id="IPR001747">
    <property type="entry name" value="Vitellogenin_N"/>
</dbReference>
<dbReference type="InterPro" id="IPR001846">
    <property type="entry name" value="VWF_type-D"/>
</dbReference>
<dbReference type="PANTHER" id="PTHR23345:SF15">
    <property type="entry name" value="VITELLOGENIN 1-RELATED"/>
    <property type="match status" value="1"/>
</dbReference>
<dbReference type="PANTHER" id="PTHR23345">
    <property type="entry name" value="VITELLOGENIN-RELATED"/>
    <property type="match status" value="1"/>
</dbReference>
<dbReference type="Pfam" id="PF09175">
    <property type="entry name" value="Vit_b-sht_shell"/>
    <property type="match status" value="1"/>
</dbReference>
<dbReference type="Pfam" id="PF09172">
    <property type="entry name" value="Vit_open_b-sht"/>
    <property type="match status" value="1"/>
</dbReference>
<dbReference type="Pfam" id="PF01347">
    <property type="entry name" value="Vitellogenin_N"/>
    <property type="match status" value="1"/>
</dbReference>
<dbReference type="Pfam" id="PF00094">
    <property type="entry name" value="VWD"/>
    <property type="match status" value="1"/>
</dbReference>
<dbReference type="SMART" id="SM01169">
    <property type="entry name" value="DUF1943"/>
    <property type="match status" value="1"/>
</dbReference>
<dbReference type="SMART" id="SM01170">
    <property type="entry name" value="DUF1944"/>
    <property type="match status" value="1"/>
</dbReference>
<dbReference type="SMART" id="SM00638">
    <property type="entry name" value="LPD_N"/>
    <property type="match status" value="1"/>
</dbReference>
<dbReference type="SMART" id="SM00216">
    <property type="entry name" value="VWD"/>
    <property type="match status" value="1"/>
</dbReference>
<dbReference type="SUPFAM" id="SSF56968">
    <property type="entry name" value="Lipovitellin-phosvitin complex, beta-sheet shell regions"/>
    <property type="match status" value="3"/>
</dbReference>
<dbReference type="SUPFAM" id="SSF48431">
    <property type="entry name" value="Lipovitellin-phosvitin complex, superhelical domain"/>
    <property type="match status" value="1"/>
</dbReference>
<dbReference type="PROSITE" id="PS51211">
    <property type="entry name" value="VITELLOGENIN"/>
    <property type="match status" value="1"/>
</dbReference>
<dbReference type="PROSITE" id="PS51233">
    <property type="entry name" value="VWFD"/>
    <property type="match status" value="1"/>
</dbReference>
<organism>
    <name type="scientific">Gallus gallus</name>
    <name type="common">Chicken</name>
    <dbReference type="NCBI Taxonomy" id="9031"/>
    <lineage>
        <taxon>Eukaryota</taxon>
        <taxon>Metazoa</taxon>
        <taxon>Chordata</taxon>
        <taxon>Craniata</taxon>
        <taxon>Vertebrata</taxon>
        <taxon>Euteleostomi</taxon>
        <taxon>Archelosauria</taxon>
        <taxon>Archosauria</taxon>
        <taxon>Dinosauria</taxon>
        <taxon>Saurischia</taxon>
        <taxon>Theropoda</taxon>
        <taxon>Coelurosauria</taxon>
        <taxon>Aves</taxon>
        <taxon>Neognathae</taxon>
        <taxon>Galloanserae</taxon>
        <taxon>Galliformes</taxon>
        <taxon>Phasianidae</taxon>
        <taxon>Phasianinae</taxon>
        <taxon>Gallus</taxon>
    </lineage>
</organism>
<protein>
    <recommendedName>
        <fullName>Vitellogenin-2</fullName>
    </recommendedName>
    <alternativeName>
        <fullName>Major vitellogenin</fullName>
    </alternativeName>
    <alternativeName>
        <fullName>Vitellogenin II</fullName>
    </alternativeName>
    <component>
        <recommendedName>
            <fullName>Lipovitellin-1</fullName>
        </recommendedName>
        <alternativeName>
            <fullName>Lipovitellin I</fullName>
            <shortName>LVI</shortName>
        </alternativeName>
    </component>
    <component>
        <recommendedName>
            <fullName>Phosvitin</fullName>
            <shortName>PV</shortName>
        </recommendedName>
    </component>
    <component>
        <recommendedName>
            <fullName>Lipovitellin-2</fullName>
        </recommendedName>
        <alternativeName>
            <fullName>Lipovitellin II</fullName>
            <shortName>LVII</shortName>
        </alternativeName>
    </component>
    <component>
        <recommendedName>
            <fullName>YGP40</fullName>
        </recommendedName>
    </component>
</protein>
<evidence type="ECO:0000255" key="1"/>
<evidence type="ECO:0000255" key="2">
    <source>
        <dbReference type="PROSITE-ProRule" id="PRU00557"/>
    </source>
</evidence>
<evidence type="ECO:0000255" key="3">
    <source>
        <dbReference type="PROSITE-ProRule" id="PRU00580"/>
    </source>
</evidence>
<evidence type="ECO:0000256" key="4">
    <source>
        <dbReference type="SAM" id="MobiDB-lite"/>
    </source>
</evidence>
<evidence type="ECO:0000305" key="5"/>
<keyword id="KW-0903">Direct protein sequencing</keyword>
<keyword id="KW-1015">Disulfide bond</keyword>
<keyword id="KW-0325">Glycoprotein</keyword>
<keyword id="KW-0597">Phosphoprotein</keyword>
<keyword id="KW-1185">Reference proteome</keyword>
<keyword id="KW-0732">Signal</keyword>
<keyword id="KW-0758">Storage protein</keyword>
<gene>
    <name type="primary">VTG2</name>
    <name type="synonym">VTGII</name>
</gene>
<comment type="function">
    <text>Precursor of the major egg-yolk proteins that are sources of nutrients during early development of oviparous organisms.</text>
</comment>
<comment type="function">
    <text>Phosvitin is believed to be of importance in sequestering calcium, iron and other cations for the developing embryo.</text>
</comment>
<comment type="tissue specificity">
    <text>After incorporation from serum via a specific receptor, it is cleaved into four fragments, heavy and light chain lipovitellins, phosphovitin and YGP40, and YGP40 is released into the yolk plasma before or during compartmentation of lipovitellin-phosvitin complex into the yolk granule.</text>
</comment>
<comment type="induction">
    <text>By steroids (estrogen).</text>
</comment>
<comment type="PTM">
    <text>Phosvitin, an egg yolk storage protein, is one of the most highly phosphorylated (10%) proteins in nature.</text>
</comment>
<comment type="PTM">
    <text>Cathepsin D is responsible for intraoocytic processing of vitellogenin.</text>
</comment>
<comment type="PTM">
    <text>May contain intrachain disulfide bonds.</text>
</comment>
<comment type="miscellaneous">
    <text>Vitellogenin II is the most abundant of the three vitellogenins (I, II, and III).</text>
</comment>
<name>VIT2_CHICK</name>
<accession>P02845</accession>
<accession>Q6LBT2</accession>
<accession>Q91026</accession>
<accession>Q91027</accession>
<sequence>MRGIILALVLTLVGSQKFDIDPGFNSRRSYLYNYEGSMLNGLQDRSLGKAGVRLSSKLEISGLPENAYLLKVRSPQVEEYNGVWPRDPFTRSSKITQVISSCFTRLFKFEYSSGRIGNIYAPEDCPDLCVNIVRGILNMFQMTIKKSQNVYELQEAGIGGICHARYVIQEDRKNSRIYVTRTVDLNNCQEKVQKSIGMAYIYPCPVDVMKERLTKGTTAFSYKLKQSDSGTLITDVSSRQVYQISPFNEPTGVAVMEARQQLTLVEVRSERGSAPDVPMQNYGSLRYRFPAVLPQMPLQLIKTKNPEQRIVETLQHIVLNNQQDFHDDVSYRFLEVVQLCRIANADNLESIWRQVSDKPRYRRWLLSAVSASGTTETLKFLKNRIRNDDLNYIQTLLTVSLTLHLLQADEHTLPIAADLMTSSRIQKNPVLQQVACLGYSSVVNRYCSQTSACPKEALQPIHDLADEAISRGREDKMKLALKCIGNMGEPASLKRILKFLPISSSSAADIPVHIQIDAITALKKIAWKDPKTVQGYLIQILADQSLPPEVRMMACAVIFETRPALALITTIANVAMKESNMQVASFVYSHMKSLSKSRLPFMYNISSACNIALKLLSPKLDSMSYRYSKVIRADTYFDNYRVGATGEIFVVNSPRTMFPSAIISKLMANSAGSVADLVEVGIRVEGLADVIMKRNIPFAEYPTYKQIKELGKALQGWKELPTETPLVSAYLKILGQEVAFININKELLQQVMKTVVEPADRNAAIKRIANQIRNSIAGQWTQPVWMGELRYVVPSCLGLPLEYGSYTTALARAAVSVEGKMTPPLTGDFRLSQLLESTMQIRSDLKPSLYVHTVATMGVNTEYFQHAVEIQGEVQTRMPMKFDAKIDVKLKNLKIETNPCREETEIVVGRHKAFAVSRNIGELGVEKRTSILPEDAPLDVTEEPFQTSERASREHFAMQGPDSMPRKQSHSSREDLRRSTGKRAHKRDICLKMHHIGCQLCFSRRSRDASFIQNTYLHKLIGEHEAKIVLMPVHTDADIDKIQLEIQAGSRAAARIITEVNPESEEEDESSPYEDIQAKLKRILGIDSMFKVANKTRHPKNRPSKKGNTVLAEFGTEPDAKTSSSSSSASSTATSSSSSSASSPNRKKPMDEEENDQVKQARNKDASSSSRSSKSSNSSKRSSSKSSNSSKRSSSSSSSSSSSSRSSSSSSSSSSNSKSSSSSSKSSSSSSRSRSSSKSSSSSSSSSSSSSSKSSSSRSSSSSSKSSSHHSHSHHSGHLNGSSSSSSSSRSVSHHSHEHHSGHLEDDSSSSSSSSVLSKIWGRHEIYQYRFRSAHRQEFPKRKLPGDRATSRYSSTRSSHDTSRAASWPKFLGDIKTPVLAAFLHGISNNKKTGGLQLVVYADTDSVRPRVQVFVTNLTDSSKWKLCADASVRNAHKAVAYVKWGWDCRDYKVSTELVTGRFAGHPAAQVKLEWPKVPSNVRSVVEWFYEFVPGAAFMLGFSERMDKNPSRQARMVVALTSPRTCDVVVKLPDIILYQKAVRLPLSLPVGPRIPASELQPPIWNVFAEAPSAVLENLKARCSVSYNKIKTFNEVKFNYSMPANCYHILVQDCSSELKFLVMMKSAGEATNLKAINIKIGSHEIDMHPVNGQVKLLVDGAESPTANISLISAGASLWIHNENQGFALAAPGHGIDKLYFDGKTITIQVPLWMAGKTCGICGKYDAECEQEYRMPNGYLAKNAVSFGHSWILEEAPCRGACKLHRSFVKLEKTVQLAGVDSKCYSTEPVLRCAKGCSATKTTPVTVGFHCLPADSANSLTDKQMKYDQKSEDMQDTVDAHTTCSCENEECST</sequence>
<proteinExistence type="evidence at protein level"/>
<feature type="signal peptide" evidence="1">
    <location>
        <begin position="1"/>
        <end position="15"/>
    </location>
</feature>
<feature type="chain" id="PRO_0000041557" description="Vitellogenin-2">
    <location>
        <begin position="16"/>
        <end position="1850"/>
    </location>
</feature>
<feature type="chain" id="PRO_0000041558" description="Lipovitellin-1">
    <location>
        <begin position="16"/>
        <end position="1111"/>
    </location>
</feature>
<feature type="chain" id="PRO_0000041559" description="Phosvitin">
    <location>
        <begin position="1112"/>
        <end position="1328"/>
    </location>
</feature>
<feature type="chain" id="PRO_0000041560" description="Lipovitellin-2">
    <location>
        <begin position="1329"/>
        <end position="1566"/>
    </location>
</feature>
<feature type="chain" id="PRO_0000041561" description="YGP40">
    <location>
        <begin position="1567"/>
        <end position="1850"/>
    </location>
</feature>
<feature type="domain" description="Vitellogenin" evidence="2">
    <location>
        <begin position="24"/>
        <end position="662"/>
    </location>
</feature>
<feature type="domain" description="VWFD" evidence="3">
    <location>
        <begin position="1579"/>
        <end position="1756"/>
    </location>
</feature>
<feature type="region of interest" description="Disordered" evidence="4">
    <location>
        <begin position="935"/>
        <end position="984"/>
    </location>
</feature>
<feature type="region of interest" description="Disordered" evidence="4">
    <location>
        <begin position="1115"/>
        <end position="1313"/>
    </location>
</feature>
<feature type="region of interest" description="Disordered" evidence="4">
    <location>
        <begin position="1338"/>
        <end position="1362"/>
    </location>
</feature>
<feature type="compositionally biased region" description="Low complexity" evidence="4">
    <location>
        <begin position="1122"/>
        <end position="1143"/>
    </location>
</feature>
<feature type="compositionally biased region" description="Basic and acidic residues" evidence="4">
    <location>
        <begin position="1156"/>
        <end position="1165"/>
    </location>
</feature>
<feature type="compositionally biased region" description="Low complexity" evidence="4">
    <location>
        <begin position="1167"/>
        <end position="1266"/>
    </location>
</feature>
<feature type="compositionally biased region" description="Basic residues" evidence="4">
    <location>
        <begin position="1267"/>
        <end position="1277"/>
    </location>
</feature>
<feature type="compositionally biased region" description="Low complexity" evidence="4">
    <location>
        <begin position="1278"/>
        <end position="1291"/>
    </location>
</feature>
<feature type="compositionally biased region" description="Basic and acidic residues" evidence="4">
    <location>
        <begin position="1338"/>
        <end position="1350"/>
    </location>
</feature>
<feature type="glycosylation site" description="N-linked (GlcNAc...) asparagine" evidence="1">
    <location>
        <position position="604"/>
    </location>
</feature>
<feature type="glycosylation site" description="N-linked (GlcNAc...) asparagine" evidence="1">
    <location>
        <position position="1094"/>
    </location>
</feature>
<feature type="glycosylation site" description="N-linked (GlcNAc...) asparagine" evidence="1">
    <location>
        <position position="1177"/>
    </location>
</feature>
<feature type="glycosylation site" description="N-linked (GlcNAc...) asparagine" evidence="1">
    <location>
        <position position="1188"/>
    </location>
</feature>
<feature type="glycosylation site" description="N-linked (GlcNAc...) asparagine">
    <location>
        <position position="1280"/>
    </location>
</feature>
<feature type="glycosylation site" description="N-linked (GlcNAc...) asparagine" evidence="1">
    <location>
        <position position="1417"/>
    </location>
</feature>
<feature type="glycosylation site" description="N-linked (GlcNAc...) asparagine" evidence="5">
    <location>
        <position position="1597"/>
    </location>
</feature>
<feature type="glycosylation site" description="N-linked (GlcNAc...) asparagine" evidence="5">
    <location>
        <position position="1665"/>
    </location>
</feature>
<feature type="disulfide bond" evidence="3">
    <location>
        <begin position="1581"/>
        <end position="1719"/>
    </location>
</feature>
<feature type="disulfide bond" evidence="3">
    <location>
        <begin position="1604"/>
        <end position="1755"/>
    </location>
</feature>
<feature type="sequence variant">
    <original>T</original>
    <variation>A</variation>
    <location>
        <position position="1840"/>
    </location>
</feature>
<feature type="sequence conflict" description="In Ref. 3." evidence="5" ref="3">
    <original>G</original>
    <variation>AHVVFLSLFVG</variation>
    <location>
        <position position="14"/>
    </location>
</feature>
<feature type="sequence conflict" description="In Ref. 2; AAA49139." evidence="5" ref="2">
    <original>S</original>
    <variation>SKT</variation>
    <location>
        <position position="579"/>
    </location>
</feature>
<feature type="sequence conflict" description="In Ref. 2; AAA49139." evidence="5" ref="2">
    <original>R</original>
    <variation>L</variation>
    <location>
        <position position="773"/>
    </location>
</feature>
<feature type="sequence conflict" description="In Ref. 2; AAA49139." evidence="5" ref="2">
    <original>S</original>
    <variation>A</variation>
    <location>
        <position position="1137"/>
    </location>
</feature>
<feature type="sequence conflict" description="In Ref. 2; AAA49139." evidence="5" ref="2">
    <original>HK</original>
    <variation>PQ</variation>
    <location>
        <begin position="1436"/>
        <end position="1437"/>
    </location>
</feature>